<keyword id="KW-0175">Coiled coil</keyword>
<keyword id="KW-0403">Intermediate filament</keyword>
<keyword id="KW-1185">Reference proteome</keyword>
<reference key="1">
    <citation type="journal article" date="1994" name="J. Neurochem.">
        <title>Cloning of multiple forms of goldfish vimentin: differential expression in CNS.</title>
        <authorList>
            <person name="Glasgow E."/>
            <person name="Druger R.K."/>
            <person name="Fuchs C."/>
            <person name="Levine E.M."/>
            <person name="Giordano S."/>
            <person name="Schechter N."/>
        </authorList>
    </citation>
    <scope>NUCLEOTIDE SEQUENCE [MRNA]</scope>
    <source>
        <tissue>Retina</tissue>
    </source>
</reference>
<proteinExistence type="evidence at transcript level"/>
<protein>
    <recommendedName>
        <fullName>Vimentin beta</fullName>
    </recommendedName>
</protein>
<accession>P48673</accession>
<sequence>MSSRTSTSSYKRMFGAERQAMVRSTYSSRQYSSPGRTTSRVSYSSASSTSPSLYMSKSARSATRLATETLDFGLADAINTEFKANRTNEKAEMQHVNDRFASYIEEVRFLEQQNKILTAELEQMRGKGSSRVGDLYEDEMRELRRQVDQLINEKASVEVDRDNLGENIERLRQKLQEEMLQREDAENSLRSFRQDVDNASLARLDLERKVESLQEEIAFLKKLHDEELAELQMQIQERHVQIDMEVAKPDLTAALRDVRQQYETLASRNLQESEEWYKSKFADLSEAATRNSEAVRLAKHEANDYRRQLQSLTCDLEALRGTNGSLERQMREMEDNFSIEASGYQDTIVRLEDDIRNTKDEMARHLREYQNLLNVKMALDIEIATYRNLLEGEEYRITTPFPNLSSLSLRESMKEIRPAMDSLSKKVVIKTIETRDGHIINQSTQKDNLE</sequence>
<name>VIMB_CARAU</name>
<evidence type="ECO:0000250" key="1"/>
<evidence type="ECO:0000255" key="2">
    <source>
        <dbReference type="PROSITE-ProRule" id="PRU01188"/>
    </source>
</evidence>
<evidence type="ECO:0000256" key="3">
    <source>
        <dbReference type="SAM" id="MobiDB-lite"/>
    </source>
</evidence>
<comment type="function">
    <text>Vimentins are class-III intermediate filaments found in various non-epithelial cells, especially mesenchymal cells. Vimentin is attached to the nucleus, endoplasmic reticulum, and mitochondria, either laterally or terminally.</text>
</comment>
<comment type="subunit">
    <text evidence="1">Homomer.</text>
</comment>
<comment type="tissue specificity">
    <text>Expressed in low amounts in retina, optic nerve, brain, and spinal cord and in very high amounts in eye lens.</text>
</comment>
<comment type="PTM">
    <text evidence="1">One of the most prominent phosphoproteins in various cells of mesenchymal origin. Phosphorylation is enhanced during cell division, at which time vimentin filaments are significantly reorganized (By similarity).</text>
</comment>
<comment type="similarity">
    <text evidence="2">Belongs to the intermediate filament family.</text>
</comment>
<feature type="chain" id="PRO_0000063766" description="Vimentin beta">
    <location>
        <begin position="1"/>
        <end position="450"/>
    </location>
</feature>
<feature type="domain" description="IF rod" evidence="2">
    <location>
        <begin position="89"/>
        <end position="397"/>
    </location>
</feature>
<feature type="region of interest" description="Head">
    <location>
        <begin position="1"/>
        <end position="81"/>
    </location>
</feature>
<feature type="region of interest" description="Disordered" evidence="3">
    <location>
        <begin position="24"/>
        <end position="56"/>
    </location>
</feature>
<feature type="region of interest" description="Coil 1A">
    <location>
        <begin position="82"/>
        <end position="117"/>
    </location>
</feature>
<feature type="region of interest" description="Linker 1">
    <location>
        <begin position="118"/>
        <end position="139"/>
    </location>
</feature>
<feature type="region of interest" description="Coil 1B">
    <location>
        <begin position="140"/>
        <end position="231"/>
    </location>
</feature>
<feature type="region of interest" description="Linker 12">
    <location>
        <begin position="232"/>
        <end position="254"/>
    </location>
</feature>
<feature type="region of interest" description="Coil 2">
    <location>
        <begin position="255"/>
        <end position="393"/>
    </location>
</feature>
<feature type="region of interest" description="Tail">
    <location>
        <begin position="394"/>
        <end position="450"/>
    </location>
</feature>
<feature type="compositionally biased region" description="Polar residues" evidence="3">
    <location>
        <begin position="24"/>
        <end position="38"/>
    </location>
</feature>
<feature type="compositionally biased region" description="Low complexity" evidence="3">
    <location>
        <begin position="39"/>
        <end position="56"/>
    </location>
</feature>
<dbReference type="EMBL" id="L23841">
    <property type="protein sequence ID" value="AAA21757.1"/>
    <property type="molecule type" value="mRNA"/>
</dbReference>
<dbReference type="PIR" id="I50484">
    <property type="entry name" value="I50484"/>
</dbReference>
<dbReference type="SMR" id="P48673"/>
<dbReference type="Proteomes" id="UP000515129">
    <property type="component" value="Unplaced"/>
</dbReference>
<dbReference type="GO" id="GO:0030424">
    <property type="term" value="C:axon"/>
    <property type="evidence" value="ECO:0007669"/>
    <property type="project" value="TreeGrafter"/>
</dbReference>
<dbReference type="GO" id="GO:0005737">
    <property type="term" value="C:cytoplasm"/>
    <property type="evidence" value="ECO:0007669"/>
    <property type="project" value="TreeGrafter"/>
</dbReference>
<dbReference type="GO" id="GO:0005882">
    <property type="term" value="C:intermediate filament"/>
    <property type="evidence" value="ECO:0007669"/>
    <property type="project" value="UniProtKB-KW"/>
</dbReference>
<dbReference type="GO" id="GO:0005886">
    <property type="term" value="C:plasma membrane"/>
    <property type="evidence" value="ECO:0007669"/>
    <property type="project" value="TreeGrafter"/>
</dbReference>
<dbReference type="GO" id="GO:0005200">
    <property type="term" value="F:structural constituent of cytoskeleton"/>
    <property type="evidence" value="ECO:0007669"/>
    <property type="project" value="TreeGrafter"/>
</dbReference>
<dbReference type="GO" id="GO:0045109">
    <property type="term" value="P:intermediate filament organization"/>
    <property type="evidence" value="ECO:0007669"/>
    <property type="project" value="TreeGrafter"/>
</dbReference>
<dbReference type="FunFam" id="1.20.5.1160:FF:000001">
    <property type="entry name" value="Keratin type II"/>
    <property type="match status" value="1"/>
</dbReference>
<dbReference type="FunFam" id="1.20.5.170:FF:000002">
    <property type="entry name" value="Type I keratin KA11"/>
    <property type="match status" value="1"/>
</dbReference>
<dbReference type="FunFam" id="1.20.5.500:FF:000001">
    <property type="entry name" value="Type II keratin 23"/>
    <property type="match status" value="1"/>
</dbReference>
<dbReference type="Gene3D" id="1.20.5.170">
    <property type="match status" value="1"/>
</dbReference>
<dbReference type="Gene3D" id="1.20.5.500">
    <property type="entry name" value="Single helix bin"/>
    <property type="match status" value="1"/>
</dbReference>
<dbReference type="Gene3D" id="1.20.5.1160">
    <property type="entry name" value="Vasodilator-stimulated phosphoprotein"/>
    <property type="match status" value="1"/>
</dbReference>
<dbReference type="InterPro" id="IPR018039">
    <property type="entry name" value="IF_conserved"/>
</dbReference>
<dbReference type="InterPro" id="IPR039008">
    <property type="entry name" value="IF_rod_dom"/>
</dbReference>
<dbReference type="InterPro" id="IPR006821">
    <property type="entry name" value="Intermed_filament_DNA-bd"/>
</dbReference>
<dbReference type="InterPro" id="IPR050405">
    <property type="entry name" value="Intermediate_filament"/>
</dbReference>
<dbReference type="PANTHER" id="PTHR45652">
    <property type="entry name" value="GLIAL FIBRILLARY ACIDIC PROTEIN"/>
    <property type="match status" value="1"/>
</dbReference>
<dbReference type="PANTHER" id="PTHR45652:SF5">
    <property type="entry name" value="VIMENTIN"/>
    <property type="match status" value="1"/>
</dbReference>
<dbReference type="Pfam" id="PF00038">
    <property type="entry name" value="Filament"/>
    <property type="match status" value="1"/>
</dbReference>
<dbReference type="Pfam" id="PF04732">
    <property type="entry name" value="Filament_head"/>
    <property type="match status" value="1"/>
</dbReference>
<dbReference type="SMART" id="SM01391">
    <property type="entry name" value="Filament"/>
    <property type="match status" value="1"/>
</dbReference>
<dbReference type="SUPFAM" id="SSF64593">
    <property type="entry name" value="Intermediate filament protein, coiled coil region"/>
    <property type="match status" value="2"/>
</dbReference>
<dbReference type="PROSITE" id="PS00226">
    <property type="entry name" value="IF_ROD_1"/>
    <property type="match status" value="1"/>
</dbReference>
<dbReference type="PROSITE" id="PS51842">
    <property type="entry name" value="IF_ROD_2"/>
    <property type="match status" value="1"/>
</dbReference>
<organism>
    <name type="scientific">Carassius auratus</name>
    <name type="common">Goldfish</name>
    <dbReference type="NCBI Taxonomy" id="7957"/>
    <lineage>
        <taxon>Eukaryota</taxon>
        <taxon>Metazoa</taxon>
        <taxon>Chordata</taxon>
        <taxon>Craniata</taxon>
        <taxon>Vertebrata</taxon>
        <taxon>Euteleostomi</taxon>
        <taxon>Actinopterygii</taxon>
        <taxon>Neopterygii</taxon>
        <taxon>Teleostei</taxon>
        <taxon>Ostariophysi</taxon>
        <taxon>Cypriniformes</taxon>
        <taxon>Cyprinidae</taxon>
        <taxon>Cyprininae</taxon>
        <taxon>Carassius</taxon>
    </lineage>
</organism>